<organism>
    <name type="scientific">Escherichia coli O9:H4 (strain HS)</name>
    <dbReference type="NCBI Taxonomy" id="331112"/>
    <lineage>
        <taxon>Bacteria</taxon>
        <taxon>Pseudomonadati</taxon>
        <taxon>Pseudomonadota</taxon>
        <taxon>Gammaproteobacteria</taxon>
        <taxon>Enterobacterales</taxon>
        <taxon>Enterobacteriaceae</taxon>
        <taxon>Escherichia</taxon>
    </lineage>
</organism>
<gene>
    <name evidence="1" type="primary">obg</name>
    <name type="ordered locus">EcHS_A3376</name>
</gene>
<evidence type="ECO:0000255" key="1">
    <source>
        <dbReference type="HAMAP-Rule" id="MF_01454"/>
    </source>
</evidence>
<evidence type="ECO:0000255" key="2">
    <source>
        <dbReference type="PROSITE-ProRule" id="PRU01231"/>
    </source>
</evidence>
<evidence type="ECO:0000256" key="3">
    <source>
        <dbReference type="SAM" id="MobiDB-lite"/>
    </source>
</evidence>
<name>OBG_ECOHS</name>
<dbReference type="EC" id="3.6.5.-" evidence="1"/>
<dbReference type="EMBL" id="CP000802">
    <property type="protein sequence ID" value="ABV07602.1"/>
    <property type="molecule type" value="Genomic_DNA"/>
</dbReference>
<dbReference type="SMR" id="A8A4Z8"/>
<dbReference type="KEGG" id="ecx:EcHS_A3376"/>
<dbReference type="HOGENOM" id="CLU_011747_2_0_6"/>
<dbReference type="GO" id="GO:0005737">
    <property type="term" value="C:cytoplasm"/>
    <property type="evidence" value="ECO:0007669"/>
    <property type="project" value="UniProtKB-SubCell"/>
</dbReference>
<dbReference type="GO" id="GO:0005525">
    <property type="term" value="F:GTP binding"/>
    <property type="evidence" value="ECO:0007669"/>
    <property type="project" value="UniProtKB-UniRule"/>
</dbReference>
<dbReference type="GO" id="GO:0003924">
    <property type="term" value="F:GTPase activity"/>
    <property type="evidence" value="ECO:0007669"/>
    <property type="project" value="UniProtKB-UniRule"/>
</dbReference>
<dbReference type="GO" id="GO:0000287">
    <property type="term" value="F:magnesium ion binding"/>
    <property type="evidence" value="ECO:0007669"/>
    <property type="project" value="InterPro"/>
</dbReference>
<dbReference type="GO" id="GO:0042254">
    <property type="term" value="P:ribosome biogenesis"/>
    <property type="evidence" value="ECO:0007669"/>
    <property type="project" value="UniProtKB-UniRule"/>
</dbReference>
<dbReference type="CDD" id="cd01898">
    <property type="entry name" value="Obg"/>
    <property type="match status" value="1"/>
</dbReference>
<dbReference type="FunFam" id="2.70.210.12:FF:000001">
    <property type="entry name" value="GTPase Obg"/>
    <property type="match status" value="1"/>
</dbReference>
<dbReference type="FunFam" id="3.40.50.300:FF:000185">
    <property type="entry name" value="GTPase Obg"/>
    <property type="match status" value="1"/>
</dbReference>
<dbReference type="Gene3D" id="2.70.210.12">
    <property type="entry name" value="GTP1/OBG domain"/>
    <property type="match status" value="1"/>
</dbReference>
<dbReference type="Gene3D" id="3.40.50.300">
    <property type="entry name" value="P-loop containing nucleotide triphosphate hydrolases"/>
    <property type="match status" value="1"/>
</dbReference>
<dbReference type="HAMAP" id="MF_01454">
    <property type="entry name" value="GTPase_Obg"/>
    <property type="match status" value="1"/>
</dbReference>
<dbReference type="InterPro" id="IPR031167">
    <property type="entry name" value="G_OBG"/>
</dbReference>
<dbReference type="InterPro" id="IPR006073">
    <property type="entry name" value="GTP-bd"/>
</dbReference>
<dbReference type="InterPro" id="IPR014100">
    <property type="entry name" value="GTP-bd_Obg/CgtA"/>
</dbReference>
<dbReference type="InterPro" id="IPR006074">
    <property type="entry name" value="GTP1-OBG_CS"/>
</dbReference>
<dbReference type="InterPro" id="IPR006169">
    <property type="entry name" value="GTP1_OBG_dom"/>
</dbReference>
<dbReference type="InterPro" id="IPR036726">
    <property type="entry name" value="GTP1_OBG_dom_sf"/>
</dbReference>
<dbReference type="InterPro" id="IPR045086">
    <property type="entry name" value="OBG_GTPase"/>
</dbReference>
<dbReference type="InterPro" id="IPR027417">
    <property type="entry name" value="P-loop_NTPase"/>
</dbReference>
<dbReference type="NCBIfam" id="TIGR02729">
    <property type="entry name" value="Obg_CgtA"/>
    <property type="match status" value="1"/>
</dbReference>
<dbReference type="NCBIfam" id="NF008955">
    <property type="entry name" value="PRK12297.1"/>
    <property type="match status" value="1"/>
</dbReference>
<dbReference type="NCBIfam" id="NF008956">
    <property type="entry name" value="PRK12299.1"/>
    <property type="match status" value="1"/>
</dbReference>
<dbReference type="PANTHER" id="PTHR11702">
    <property type="entry name" value="DEVELOPMENTALLY REGULATED GTP-BINDING PROTEIN-RELATED"/>
    <property type="match status" value="1"/>
</dbReference>
<dbReference type="PANTHER" id="PTHR11702:SF31">
    <property type="entry name" value="MITOCHONDRIAL RIBOSOME-ASSOCIATED GTPASE 2"/>
    <property type="match status" value="1"/>
</dbReference>
<dbReference type="Pfam" id="PF01018">
    <property type="entry name" value="GTP1_OBG"/>
    <property type="match status" value="1"/>
</dbReference>
<dbReference type="Pfam" id="PF01926">
    <property type="entry name" value="MMR_HSR1"/>
    <property type="match status" value="1"/>
</dbReference>
<dbReference type="PIRSF" id="PIRSF002401">
    <property type="entry name" value="GTP_bd_Obg/CgtA"/>
    <property type="match status" value="1"/>
</dbReference>
<dbReference type="PRINTS" id="PR00326">
    <property type="entry name" value="GTP1OBG"/>
</dbReference>
<dbReference type="SUPFAM" id="SSF82051">
    <property type="entry name" value="Obg GTP-binding protein N-terminal domain"/>
    <property type="match status" value="1"/>
</dbReference>
<dbReference type="SUPFAM" id="SSF52540">
    <property type="entry name" value="P-loop containing nucleoside triphosphate hydrolases"/>
    <property type="match status" value="1"/>
</dbReference>
<dbReference type="PROSITE" id="PS51710">
    <property type="entry name" value="G_OBG"/>
    <property type="match status" value="1"/>
</dbReference>
<dbReference type="PROSITE" id="PS00905">
    <property type="entry name" value="GTP1_OBG"/>
    <property type="match status" value="1"/>
</dbReference>
<dbReference type="PROSITE" id="PS51883">
    <property type="entry name" value="OBG"/>
    <property type="match status" value="1"/>
</dbReference>
<accession>A8A4Z8</accession>
<protein>
    <recommendedName>
        <fullName evidence="1">GTPase Obg</fullName>
        <ecNumber evidence="1">3.6.5.-</ecNumber>
    </recommendedName>
    <alternativeName>
        <fullName evidence="1">GTP-binding protein Obg</fullName>
    </alternativeName>
</protein>
<keyword id="KW-0963">Cytoplasm</keyword>
<keyword id="KW-0342">GTP-binding</keyword>
<keyword id="KW-0378">Hydrolase</keyword>
<keyword id="KW-0460">Magnesium</keyword>
<keyword id="KW-0479">Metal-binding</keyword>
<keyword id="KW-0547">Nucleotide-binding</keyword>
<reference key="1">
    <citation type="journal article" date="2008" name="J. Bacteriol.">
        <title>The pangenome structure of Escherichia coli: comparative genomic analysis of E. coli commensal and pathogenic isolates.</title>
        <authorList>
            <person name="Rasko D.A."/>
            <person name="Rosovitz M.J."/>
            <person name="Myers G.S.A."/>
            <person name="Mongodin E.F."/>
            <person name="Fricke W.F."/>
            <person name="Gajer P."/>
            <person name="Crabtree J."/>
            <person name="Sebaihia M."/>
            <person name="Thomson N.R."/>
            <person name="Chaudhuri R."/>
            <person name="Henderson I.R."/>
            <person name="Sperandio V."/>
            <person name="Ravel J."/>
        </authorList>
    </citation>
    <scope>NUCLEOTIDE SEQUENCE [LARGE SCALE GENOMIC DNA]</scope>
    <source>
        <strain>HS</strain>
    </source>
</reference>
<sequence>MKFVDEASILVVAGDGGNGCVSFRREKYIPKGGPDGGDGGDGGDVWMEADENLNTLIDYRFEKSFRAERGQNGASRDCTGKRGKDVTIKVPVGTRVIDQGTGETMGDMTKHGQRLLVAKGGWHGLGNTRFKSSVNRTPRQKTNGTPGDKRELLLELMLLADVGMLGMPNAGKSTFIRAVSAAKPKVADYPFTTLVPSLGVVRMDNEKSFVVADIPGLIEGAAEGAGLGIRFLKHLERCRVLLHLIDIDPIDGTDPVENARIIISELEKYSQDLAAKPRWLVFNKIDLLDKAEAEEKAKAIAEALGWEDKYYLISAASGLGVKDLCWDVMTFIIENPVVQAEEAKQPEKVEFMWDDYHRQQLEEIAEEDDEDWDDDWDEDDEEGVEFIYKR</sequence>
<proteinExistence type="inferred from homology"/>
<comment type="function">
    <text evidence="1">An essential GTPase which binds GTP, GDP and possibly (p)ppGpp with moderate affinity, with high nucleotide exchange rates and a fairly low GTP hydrolysis rate. Plays a role in control of the cell cycle, stress response, ribosome biogenesis and in those bacteria that undergo differentiation, in morphogenesis control.</text>
</comment>
<comment type="cofactor">
    <cofactor evidence="1">
        <name>Mg(2+)</name>
        <dbReference type="ChEBI" id="CHEBI:18420"/>
    </cofactor>
</comment>
<comment type="subunit">
    <text evidence="1">Monomer.</text>
</comment>
<comment type="subcellular location">
    <subcellularLocation>
        <location evidence="1">Cytoplasm</location>
    </subcellularLocation>
</comment>
<comment type="similarity">
    <text evidence="1">Belongs to the TRAFAC class OBG-HflX-like GTPase superfamily. OBG GTPase family.</text>
</comment>
<feature type="chain" id="PRO_0000385928" description="GTPase Obg">
    <location>
        <begin position="1"/>
        <end position="390"/>
    </location>
</feature>
<feature type="domain" description="Obg" evidence="2">
    <location>
        <begin position="1"/>
        <end position="159"/>
    </location>
</feature>
<feature type="domain" description="OBG-type G" evidence="1">
    <location>
        <begin position="160"/>
        <end position="333"/>
    </location>
</feature>
<feature type="region of interest" description="Disordered" evidence="3">
    <location>
        <begin position="127"/>
        <end position="147"/>
    </location>
</feature>
<feature type="compositionally biased region" description="Polar residues" evidence="3">
    <location>
        <begin position="129"/>
        <end position="145"/>
    </location>
</feature>
<feature type="binding site" evidence="1">
    <location>
        <begin position="166"/>
        <end position="173"/>
    </location>
    <ligand>
        <name>GTP</name>
        <dbReference type="ChEBI" id="CHEBI:37565"/>
    </ligand>
</feature>
<feature type="binding site" evidence="1">
    <location>
        <position position="173"/>
    </location>
    <ligand>
        <name>Mg(2+)</name>
        <dbReference type="ChEBI" id="CHEBI:18420"/>
    </ligand>
</feature>
<feature type="binding site" evidence="1">
    <location>
        <begin position="191"/>
        <end position="195"/>
    </location>
    <ligand>
        <name>GTP</name>
        <dbReference type="ChEBI" id="CHEBI:37565"/>
    </ligand>
</feature>
<feature type="binding site" evidence="1">
    <location>
        <position position="193"/>
    </location>
    <ligand>
        <name>Mg(2+)</name>
        <dbReference type="ChEBI" id="CHEBI:18420"/>
    </ligand>
</feature>
<feature type="binding site" evidence="1">
    <location>
        <begin position="213"/>
        <end position="216"/>
    </location>
    <ligand>
        <name>GTP</name>
        <dbReference type="ChEBI" id="CHEBI:37565"/>
    </ligand>
</feature>
<feature type="binding site" evidence="1">
    <location>
        <begin position="283"/>
        <end position="286"/>
    </location>
    <ligand>
        <name>GTP</name>
        <dbReference type="ChEBI" id="CHEBI:37565"/>
    </ligand>
</feature>
<feature type="binding site" evidence="1">
    <location>
        <begin position="314"/>
        <end position="316"/>
    </location>
    <ligand>
        <name>GTP</name>
        <dbReference type="ChEBI" id="CHEBI:37565"/>
    </ligand>
</feature>